<organism>
    <name type="scientific">Oncorhynchus mykiss</name>
    <name type="common">Rainbow trout</name>
    <name type="synonym">Salmo gairdneri</name>
    <dbReference type="NCBI Taxonomy" id="8022"/>
    <lineage>
        <taxon>Eukaryota</taxon>
        <taxon>Metazoa</taxon>
        <taxon>Chordata</taxon>
        <taxon>Craniata</taxon>
        <taxon>Vertebrata</taxon>
        <taxon>Euteleostomi</taxon>
        <taxon>Actinopterygii</taxon>
        <taxon>Neopterygii</taxon>
        <taxon>Teleostei</taxon>
        <taxon>Protacanthopterygii</taxon>
        <taxon>Salmoniformes</taxon>
        <taxon>Salmonidae</taxon>
        <taxon>Salmoninae</taxon>
        <taxon>Oncorhynchus</taxon>
    </lineage>
</organism>
<protein>
    <recommendedName>
        <fullName>Neuropeptide Y</fullName>
        <shortName>NPY</shortName>
    </recommendedName>
</protein>
<feature type="peptide" id="PRO_0000044791" description="Neuropeptide Y">
    <location>
        <begin position="1"/>
        <end position="36"/>
    </location>
</feature>
<feature type="modified residue" description="Tyrosine amide" evidence="1">
    <location>
        <position position="36"/>
    </location>
</feature>
<proteinExistence type="evidence at protein level"/>
<keyword id="KW-0027">Amidation</keyword>
<keyword id="KW-0903">Direct protein sequencing</keyword>
<keyword id="KW-0527">Neuropeptide</keyword>
<keyword id="KW-0964">Secreted</keyword>
<gene>
    <name type="primary">npy</name>
</gene>
<sequence length="36" mass="4311">YPVKPENPGEDAPTEELAKYYTALRHYINLITRQRY</sequence>
<evidence type="ECO:0000269" key="1">
    <source>
    </source>
</evidence>
<evidence type="ECO:0000305" key="2"/>
<name>NPY_ONCMY</name>
<dbReference type="SMR" id="P29071"/>
<dbReference type="Proteomes" id="UP000694395">
    <property type="component" value="Unplaced"/>
</dbReference>
<dbReference type="GO" id="GO:0005615">
    <property type="term" value="C:extracellular space"/>
    <property type="evidence" value="ECO:0007669"/>
    <property type="project" value="TreeGrafter"/>
</dbReference>
<dbReference type="GO" id="GO:0005184">
    <property type="term" value="F:neuropeptide hormone activity"/>
    <property type="evidence" value="ECO:0007669"/>
    <property type="project" value="TreeGrafter"/>
</dbReference>
<dbReference type="GO" id="GO:0031841">
    <property type="term" value="F:neuropeptide Y receptor binding"/>
    <property type="evidence" value="ECO:0007669"/>
    <property type="project" value="TreeGrafter"/>
</dbReference>
<dbReference type="GO" id="GO:0007631">
    <property type="term" value="P:feeding behavior"/>
    <property type="evidence" value="ECO:0007669"/>
    <property type="project" value="TreeGrafter"/>
</dbReference>
<dbReference type="GO" id="GO:0007218">
    <property type="term" value="P:neuropeptide signaling pathway"/>
    <property type="evidence" value="ECO:0007669"/>
    <property type="project" value="UniProtKB-KW"/>
</dbReference>
<dbReference type="CDD" id="cd00126">
    <property type="entry name" value="PAH"/>
    <property type="match status" value="1"/>
</dbReference>
<dbReference type="Gene3D" id="6.10.250.900">
    <property type="match status" value="1"/>
</dbReference>
<dbReference type="InterPro" id="IPR001955">
    <property type="entry name" value="Pancreatic_hormone-like"/>
</dbReference>
<dbReference type="InterPro" id="IPR020392">
    <property type="entry name" value="Pancreatic_hormone-like_CS"/>
</dbReference>
<dbReference type="PANTHER" id="PTHR10533:SF12">
    <property type="match status" value="1"/>
</dbReference>
<dbReference type="PANTHER" id="PTHR10533">
    <property type="entry name" value="NEUROPEPTIDE Y/PANCREATIC HORMONE/PEPTIDE YY"/>
    <property type="match status" value="1"/>
</dbReference>
<dbReference type="Pfam" id="PF00159">
    <property type="entry name" value="Hormone_3"/>
    <property type="match status" value="1"/>
</dbReference>
<dbReference type="PRINTS" id="PR00278">
    <property type="entry name" value="PANCHORMONE"/>
</dbReference>
<dbReference type="SMART" id="SM00309">
    <property type="entry name" value="PAH"/>
    <property type="match status" value="1"/>
</dbReference>
<dbReference type="PROSITE" id="PS00265">
    <property type="entry name" value="PANCREATIC_HORMONE_1"/>
    <property type="match status" value="1"/>
</dbReference>
<dbReference type="PROSITE" id="PS50276">
    <property type="entry name" value="PANCREATIC_HORMONE_2"/>
    <property type="match status" value="1"/>
</dbReference>
<accession>P29071</accession>
<reference key="1">
    <citation type="journal article" date="1992" name="Eur. J. Biochem.">
        <title>Characterization of peptides related to neuropeptide tyrosine and peptide tyrosine-tyrosine from the brain and gastrointestinal tract of teleost fish.</title>
        <authorList>
            <person name="Jensen J."/>
            <person name="Conlon J.M."/>
        </authorList>
    </citation>
    <scope>PROTEIN SEQUENCE</scope>
    <scope>AMIDATION AT TYR-36</scope>
    <source>
        <tissue>Brain</tissue>
    </source>
</reference>
<comment type="function">
    <text>NPY is implicated in the control of feeding and in secretion of gonadotrophin-release hormone.</text>
</comment>
<comment type="subcellular location">
    <subcellularLocation>
        <location>Secreted</location>
    </subcellularLocation>
</comment>
<comment type="similarity">
    <text evidence="2">Belongs to the NPY family.</text>
</comment>